<organism>
    <name type="scientific">Buchnera aphidicola subsp. Schizaphis graminum (strain Sg)</name>
    <dbReference type="NCBI Taxonomy" id="198804"/>
    <lineage>
        <taxon>Bacteria</taxon>
        <taxon>Pseudomonadati</taxon>
        <taxon>Pseudomonadota</taxon>
        <taxon>Gammaproteobacteria</taxon>
        <taxon>Enterobacterales</taxon>
        <taxon>Erwiniaceae</taxon>
        <taxon>Buchnera</taxon>
    </lineage>
</organism>
<protein>
    <recommendedName>
        <fullName evidence="1">CTP synthase</fullName>
        <ecNumber evidence="1">6.3.4.2</ecNumber>
    </recommendedName>
    <alternativeName>
        <fullName evidence="1">Cytidine 5'-triphosphate synthase</fullName>
    </alternativeName>
    <alternativeName>
        <fullName evidence="1">Cytidine triphosphate synthetase</fullName>
        <shortName evidence="1">CTP synthetase</shortName>
        <shortName evidence="1">CTPS</shortName>
    </alternativeName>
    <alternativeName>
        <fullName evidence="1">UTP--ammonia ligase</fullName>
    </alternativeName>
</protein>
<gene>
    <name evidence="1" type="primary">pyrG</name>
    <name type="ordered locus">BUsg_399</name>
</gene>
<proteinExistence type="inferred from homology"/>
<dbReference type="EC" id="6.3.4.2" evidence="1"/>
<dbReference type="EMBL" id="AE013218">
    <property type="protein sequence ID" value="AAM67950.1"/>
    <property type="molecule type" value="Genomic_DNA"/>
</dbReference>
<dbReference type="RefSeq" id="WP_011053917.1">
    <property type="nucleotide sequence ID" value="NC_004061.1"/>
</dbReference>
<dbReference type="SMR" id="P59039"/>
<dbReference type="STRING" id="198804.BUsg_399"/>
<dbReference type="GeneID" id="93003873"/>
<dbReference type="KEGG" id="bas:BUsg_399"/>
<dbReference type="eggNOG" id="COG0504">
    <property type="taxonomic scope" value="Bacteria"/>
</dbReference>
<dbReference type="HOGENOM" id="CLU_011675_5_0_6"/>
<dbReference type="UniPathway" id="UPA00159">
    <property type="reaction ID" value="UER00277"/>
</dbReference>
<dbReference type="Proteomes" id="UP000000416">
    <property type="component" value="Chromosome"/>
</dbReference>
<dbReference type="GO" id="GO:0005829">
    <property type="term" value="C:cytosol"/>
    <property type="evidence" value="ECO:0007669"/>
    <property type="project" value="TreeGrafter"/>
</dbReference>
<dbReference type="GO" id="GO:0005524">
    <property type="term" value="F:ATP binding"/>
    <property type="evidence" value="ECO:0007669"/>
    <property type="project" value="UniProtKB-KW"/>
</dbReference>
<dbReference type="GO" id="GO:0003883">
    <property type="term" value="F:CTP synthase activity"/>
    <property type="evidence" value="ECO:0007669"/>
    <property type="project" value="UniProtKB-UniRule"/>
</dbReference>
<dbReference type="GO" id="GO:0004359">
    <property type="term" value="F:glutaminase activity"/>
    <property type="evidence" value="ECO:0007669"/>
    <property type="project" value="RHEA"/>
</dbReference>
<dbReference type="GO" id="GO:0042802">
    <property type="term" value="F:identical protein binding"/>
    <property type="evidence" value="ECO:0007669"/>
    <property type="project" value="TreeGrafter"/>
</dbReference>
<dbReference type="GO" id="GO:0046872">
    <property type="term" value="F:metal ion binding"/>
    <property type="evidence" value="ECO:0007669"/>
    <property type="project" value="UniProtKB-KW"/>
</dbReference>
<dbReference type="GO" id="GO:0044210">
    <property type="term" value="P:'de novo' CTP biosynthetic process"/>
    <property type="evidence" value="ECO:0007669"/>
    <property type="project" value="UniProtKB-UniRule"/>
</dbReference>
<dbReference type="GO" id="GO:0019856">
    <property type="term" value="P:pyrimidine nucleobase biosynthetic process"/>
    <property type="evidence" value="ECO:0007669"/>
    <property type="project" value="TreeGrafter"/>
</dbReference>
<dbReference type="CDD" id="cd03113">
    <property type="entry name" value="CTPS_N"/>
    <property type="match status" value="1"/>
</dbReference>
<dbReference type="CDD" id="cd01746">
    <property type="entry name" value="GATase1_CTP_Synthase"/>
    <property type="match status" value="1"/>
</dbReference>
<dbReference type="FunFam" id="3.40.50.300:FF:000009">
    <property type="entry name" value="CTP synthase"/>
    <property type="match status" value="1"/>
</dbReference>
<dbReference type="FunFam" id="3.40.50.880:FF:000002">
    <property type="entry name" value="CTP synthase"/>
    <property type="match status" value="1"/>
</dbReference>
<dbReference type="Gene3D" id="3.40.50.880">
    <property type="match status" value="1"/>
</dbReference>
<dbReference type="Gene3D" id="3.40.50.300">
    <property type="entry name" value="P-loop containing nucleotide triphosphate hydrolases"/>
    <property type="match status" value="1"/>
</dbReference>
<dbReference type="HAMAP" id="MF_01227">
    <property type="entry name" value="PyrG"/>
    <property type="match status" value="1"/>
</dbReference>
<dbReference type="InterPro" id="IPR029062">
    <property type="entry name" value="Class_I_gatase-like"/>
</dbReference>
<dbReference type="InterPro" id="IPR004468">
    <property type="entry name" value="CTP_synthase"/>
</dbReference>
<dbReference type="InterPro" id="IPR017456">
    <property type="entry name" value="CTP_synthase_N"/>
</dbReference>
<dbReference type="InterPro" id="IPR017926">
    <property type="entry name" value="GATASE"/>
</dbReference>
<dbReference type="InterPro" id="IPR033828">
    <property type="entry name" value="GATase1_CTP_Synthase"/>
</dbReference>
<dbReference type="InterPro" id="IPR027417">
    <property type="entry name" value="P-loop_NTPase"/>
</dbReference>
<dbReference type="NCBIfam" id="NF003792">
    <property type="entry name" value="PRK05380.1"/>
    <property type="match status" value="1"/>
</dbReference>
<dbReference type="NCBIfam" id="TIGR00337">
    <property type="entry name" value="PyrG"/>
    <property type="match status" value="1"/>
</dbReference>
<dbReference type="PANTHER" id="PTHR11550">
    <property type="entry name" value="CTP SYNTHASE"/>
    <property type="match status" value="1"/>
</dbReference>
<dbReference type="PANTHER" id="PTHR11550:SF0">
    <property type="entry name" value="CTP SYNTHASE-RELATED"/>
    <property type="match status" value="1"/>
</dbReference>
<dbReference type="Pfam" id="PF06418">
    <property type="entry name" value="CTP_synth_N"/>
    <property type="match status" value="1"/>
</dbReference>
<dbReference type="Pfam" id="PF00117">
    <property type="entry name" value="GATase"/>
    <property type="match status" value="1"/>
</dbReference>
<dbReference type="SUPFAM" id="SSF52317">
    <property type="entry name" value="Class I glutamine amidotransferase-like"/>
    <property type="match status" value="1"/>
</dbReference>
<dbReference type="SUPFAM" id="SSF52540">
    <property type="entry name" value="P-loop containing nucleoside triphosphate hydrolases"/>
    <property type="match status" value="1"/>
</dbReference>
<dbReference type="PROSITE" id="PS51273">
    <property type="entry name" value="GATASE_TYPE_1"/>
    <property type="match status" value="1"/>
</dbReference>
<reference key="1">
    <citation type="journal article" date="2002" name="Science">
        <title>50 million years of genomic stasis in endosymbiotic bacteria.</title>
        <authorList>
            <person name="Tamas I."/>
            <person name="Klasson L."/>
            <person name="Canbaeck B."/>
            <person name="Naeslund A.K."/>
            <person name="Eriksson A.-S."/>
            <person name="Wernegreen J.J."/>
            <person name="Sandstroem J.P."/>
            <person name="Moran N.A."/>
            <person name="Andersson S.G.E."/>
        </authorList>
    </citation>
    <scope>NUCLEOTIDE SEQUENCE [LARGE SCALE GENOMIC DNA]</scope>
    <source>
        <strain>Sg</strain>
    </source>
</reference>
<feature type="chain" id="PRO_0000138170" description="CTP synthase">
    <location>
        <begin position="1"/>
        <end position="553"/>
    </location>
</feature>
<feature type="domain" description="Glutamine amidotransferase type-1" evidence="1">
    <location>
        <begin position="291"/>
        <end position="544"/>
    </location>
</feature>
<feature type="region of interest" description="Amidoligase domain" evidence="1">
    <location>
        <begin position="1"/>
        <end position="266"/>
    </location>
</feature>
<feature type="active site" description="Nucleophile; for glutamine hydrolysis" evidence="1">
    <location>
        <position position="379"/>
    </location>
</feature>
<feature type="active site" evidence="1">
    <location>
        <position position="517"/>
    </location>
</feature>
<feature type="active site" evidence="1">
    <location>
        <position position="519"/>
    </location>
</feature>
<feature type="binding site" evidence="1">
    <location>
        <position position="14"/>
    </location>
    <ligand>
        <name>CTP</name>
        <dbReference type="ChEBI" id="CHEBI:37563"/>
        <note>allosteric inhibitor</note>
    </ligand>
</feature>
<feature type="binding site" evidence="1">
    <location>
        <position position="14"/>
    </location>
    <ligand>
        <name>UTP</name>
        <dbReference type="ChEBI" id="CHEBI:46398"/>
    </ligand>
</feature>
<feature type="binding site" evidence="1">
    <location>
        <begin position="15"/>
        <end position="20"/>
    </location>
    <ligand>
        <name>ATP</name>
        <dbReference type="ChEBI" id="CHEBI:30616"/>
    </ligand>
</feature>
<feature type="binding site" evidence="1">
    <location>
        <position position="72"/>
    </location>
    <ligand>
        <name>ATP</name>
        <dbReference type="ChEBI" id="CHEBI:30616"/>
    </ligand>
</feature>
<feature type="binding site" evidence="1">
    <location>
        <position position="72"/>
    </location>
    <ligand>
        <name>Mg(2+)</name>
        <dbReference type="ChEBI" id="CHEBI:18420"/>
    </ligand>
</feature>
<feature type="binding site" evidence="1">
    <location>
        <position position="140"/>
    </location>
    <ligand>
        <name>Mg(2+)</name>
        <dbReference type="ChEBI" id="CHEBI:18420"/>
    </ligand>
</feature>
<feature type="binding site" evidence="1">
    <location>
        <begin position="147"/>
        <end position="149"/>
    </location>
    <ligand>
        <name>CTP</name>
        <dbReference type="ChEBI" id="CHEBI:37563"/>
        <note>allosteric inhibitor</note>
    </ligand>
</feature>
<feature type="binding site" evidence="1">
    <location>
        <begin position="187"/>
        <end position="192"/>
    </location>
    <ligand>
        <name>CTP</name>
        <dbReference type="ChEBI" id="CHEBI:37563"/>
        <note>allosteric inhibitor</note>
    </ligand>
</feature>
<feature type="binding site" evidence="1">
    <location>
        <begin position="187"/>
        <end position="192"/>
    </location>
    <ligand>
        <name>UTP</name>
        <dbReference type="ChEBI" id="CHEBI:46398"/>
    </ligand>
</feature>
<feature type="binding site" evidence="1">
    <location>
        <position position="223"/>
    </location>
    <ligand>
        <name>CTP</name>
        <dbReference type="ChEBI" id="CHEBI:37563"/>
        <note>allosteric inhibitor</note>
    </ligand>
</feature>
<feature type="binding site" evidence="1">
    <location>
        <position position="223"/>
    </location>
    <ligand>
        <name>UTP</name>
        <dbReference type="ChEBI" id="CHEBI:46398"/>
    </ligand>
</feature>
<feature type="binding site" evidence="1">
    <location>
        <begin position="239"/>
        <end position="241"/>
    </location>
    <ligand>
        <name>ATP</name>
        <dbReference type="ChEBI" id="CHEBI:30616"/>
    </ligand>
</feature>
<feature type="binding site" evidence="1">
    <location>
        <position position="352"/>
    </location>
    <ligand>
        <name>L-glutamine</name>
        <dbReference type="ChEBI" id="CHEBI:58359"/>
    </ligand>
</feature>
<feature type="binding site" evidence="1">
    <location>
        <begin position="380"/>
        <end position="383"/>
    </location>
    <ligand>
        <name>L-glutamine</name>
        <dbReference type="ChEBI" id="CHEBI:58359"/>
    </ligand>
</feature>
<feature type="binding site" evidence="1">
    <location>
        <position position="403"/>
    </location>
    <ligand>
        <name>L-glutamine</name>
        <dbReference type="ChEBI" id="CHEBI:58359"/>
    </ligand>
</feature>
<feature type="binding site" evidence="1">
    <location>
        <position position="472"/>
    </location>
    <ligand>
        <name>L-glutamine</name>
        <dbReference type="ChEBI" id="CHEBI:58359"/>
    </ligand>
</feature>
<accession>P59039</accession>
<keyword id="KW-0067">ATP-binding</keyword>
<keyword id="KW-0315">Glutamine amidotransferase</keyword>
<keyword id="KW-0436">Ligase</keyword>
<keyword id="KW-0460">Magnesium</keyword>
<keyword id="KW-0479">Metal-binding</keyword>
<keyword id="KW-0547">Nucleotide-binding</keyword>
<keyword id="KW-0665">Pyrimidine biosynthesis</keyword>
<evidence type="ECO:0000255" key="1">
    <source>
        <dbReference type="HAMAP-Rule" id="MF_01227"/>
    </source>
</evidence>
<sequence length="553" mass="62453">MTKNYIFITGGVVSSLGKGIAAASLGAVLEARNLKITIMKLDPYINVDPGTMSPIQHGEVFVTEDGAETDLDLGHYERFIRTKMTCLNNFTTGSIYSEVLKKERRGDYLGSTIQVIPHITNAIKDRIILCSKNSDIILVEIGGTVGDIESLPFLEAIRQLAVDIGRKNVIYIHLTLVPYIKTAGEIKTKPTQHSVKELLSIGIQPDILICRSQKTVPINERKKIALFCNVPVNAVISLKDVDSIYTIPKLLKDQKLDNYICEYFKLNVPQADLKEWEKVIYEEKNASKEIIIGIIGKYIKLPDAYKSVIEALKHAGLKNKIKVKIELINSQEIENKNFKLLQNLNGILIPGGFGDRGIIGKLLSVQYARENNIPYFGICLGMQIAIIEFAQNVIGIKEANSTEFDPQCKFPVIDLIKTKKNDIKDTRQGKKNNKSNFGGTMRLGSQPCKLIFNSLSRKLYKKDTIIERHRHRYEVNNFLLKKIEKNGLKIAGRSKKNNIVEIIEIFDHPWFIGCQFHPEFTSTPRDGHPLFIDFIKSAKKNKKNNFKIKVKNV</sequence>
<comment type="function">
    <text evidence="1">Catalyzes the ATP-dependent amination of UTP to CTP with either L-glutamine or ammonia as the source of nitrogen. Regulates intracellular CTP levels through interactions with the four ribonucleotide triphosphates.</text>
</comment>
<comment type="catalytic activity">
    <reaction evidence="1">
        <text>UTP + L-glutamine + ATP + H2O = CTP + L-glutamate + ADP + phosphate + 2 H(+)</text>
        <dbReference type="Rhea" id="RHEA:26426"/>
        <dbReference type="ChEBI" id="CHEBI:15377"/>
        <dbReference type="ChEBI" id="CHEBI:15378"/>
        <dbReference type="ChEBI" id="CHEBI:29985"/>
        <dbReference type="ChEBI" id="CHEBI:30616"/>
        <dbReference type="ChEBI" id="CHEBI:37563"/>
        <dbReference type="ChEBI" id="CHEBI:43474"/>
        <dbReference type="ChEBI" id="CHEBI:46398"/>
        <dbReference type="ChEBI" id="CHEBI:58359"/>
        <dbReference type="ChEBI" id="CHEBI:456216"/>
        <dbReference type="EC" id="6.3.4.2"/>
    </reaction>
</comment>
<comment type="catalytic activity">
    <reaction evidence="1">
        <text>L-glutamine + H2O = L-glutamate + NH4(+)</text>
        <dbReference type="Rhea" id="RHEA:15889"/>
        <dbReference type="ChEBI" id="CHEBI:15377"/>
        <dbReference type="ChEBI" id="CHEBI:28938"/>
        <dbReference type="ChEBI" id="CHEBI:29985"/>
        <dbReference type="ChEBI" id="CHEBI:58359"/>
    </reaction>
</comment>
<comment type="catalytic activity">
    <reaction evidence="1">
        <text>UTP + NH4(+) + ATP = CTP + ADP + phosphate + 2 H(+)</text>
        <dbReference type="Rhea" id="RHEA:16597"/>
        <dbReference type="ChEBI" id="CHEBI:15378"/>
        <dbReference type="ChEBI" id="CHEBI:28938"/>
        <dbReference type="ChEBI" id="CHEBI:30616"/>
        <dbReference type="ChEBI" id="CHEBI:37563"/>
        <dbReference type="ChEBI" id="CHEBI:43474"/>
        <dbReference type="ChEBI" id="CHEBI:46398"/>
        <dbReference type="ChEBI" id="CHEBI:456216"/>
    </reaction>
</comment>
<comment type="activity regulation">
    <text evidence="1">Allosterically activated by GTP, when glutamine is the substrate; GTP has no effect on the reaction when ammonia is the substrate. The allosteric effector GTP functions by stabilizing the protein conformation that binds the tetrahedral intermediate(s) formed during glutamine hydrolysis. Inhibited by the product CTP, via allosteric rather than competitive inhibition.</text>
</comment>
<comment type="pathway">
    <text evidence="1">Pyrimidine metabolism; CTP biosynthesis via de novo pathway; CTP from UDP: step 2/2.</text>
</comment>
<comment type="subunit">
    <text evidence="1">Homotetramer.</text>
</comment>
<comment type="miscellaneous">
    <text evidence="1">CTPSs have evolved a hybrid strategy for distinguishing between UTP and CTP. The overlapping regions of the product feedback inhibitory and substrate sites recognize a common feature in both compounds, the triphosphate moiety. To differentiate isosteric substrate and product pyrimidine rings, an additional pocket far from the expected kinase/ligase catalytic site, specifically recognizes the cytosine and ribose portions of the product inhibitor.</text>
</comment>
<comment type="similarity">
    <text evidence="1">Belongs to the CTP synthase family.</text>
</comment>
<name>PYRG_BUCAP</name>